<name>LIFO_PSEWI</name>
<protein>
    <recommendedName>
        <fullName>Lipase chaperone</fullName>
    </recommendedName>
    <alternativeName>
        <fullName>Lipase activator protein</fullName>
    </alternativeName>
    <alternativeName>
        <fullName>Lipase foldase</fullName>
    </alternativeName>
    <alternativeName>
        <fullName>Lipase helper protein</fullName>
    </alternativeName>
    <alternativeName>
        <fullName>Lipase modulator</fullName>
    </alternativeName>
</protein>
<reference key="1">
    <citation type="submission" date="1997-02" db="EMBL/GenBank/DDBJ databases">
        <title>Molecular characterization of an operon from Pseudomonas wisconsinensis responsible for the production of an extracellular lipase.</title>
        <authorList>
            <person name="Hazbon M.H."/>
            <person name="Dufel H."/>
            <person name="Cornelis P."/>
            <person name="Jaeger K.-E."/>
        </authorList>
    </citation>
    <scope>NUCLEOTIDE SEQUENCE [GENOMIC DNA]</scope>
    <source>
        <strain>LMG P-15151</strain>
    </source>
</reference>
<feature type="chain" id="PRO_0000218486" description="Lipase chaperone">
    <location>
        <begin position="1"/>
        <end position="352"/>
    </location>
</feature>
<feature type="transmembrane region" description="Helical" evidence="2">
    <location>
        <begin position="7"/>
        <end position="28"/>
    </location>
</feature>
<comment type="function">
    <text evidence="1">May be involved in the folding of the extracellular lipase during its passage through the periplasm.</text>
</comment>
<comment type="subcellular location">
    <subcellularLocation>
        <location evidence="1">Cell inner membrane</location>
        <topology evidence="1">Single-pass membrane protein</topology>
        <orientation evidence="1">Periplasmic side</orientation>
    </subcellularLocation>
</comment>
<comment type="similarity">
    <text evidence="3">Belongs to the lipase chaperone family.</text>
</comment>
<accession>O05938</accession>
<sequence>MSKFFSLSLVAVVVAGGLTLYWRWPAAVPEAQPATTVAVPSRQSLIEQASTSPAKAPAEAQPSIAVTLPSLAGTEVDGQLRTDAAGNLLLDLAVRDYFDYFLSAVDHSGLDAVIEALLADAGRRLPEPALGQMISLLGDYLDYKRASMALMQQPLDARQQVEPQAQLQALQSAFARLDELRRAHFSATAQEALFGAEQAYARYTLDSLAVQQRDDLGEAQRTQLLEQLRERLPDALRESEQRQQLAQEQLQRSEQLWRDGADEQQVREFLAMTYDPDTVQRLLDEQRRERDWQQHYQAYRNELASLQGRGLSEADGEQLQRQLRERLFSSEDRHRVETYDAIAAKQPEPLDP</sequence>
<keyword id="KW-0997">Cell inner membrane</keyword>
<keyword id="KW-1003">Cell membrane</keyword>
<keyword id="KW-0143">Chaperone</keyword>
<keyword id="KW-0442">Lipid degradation</keyword>
<keyword id="KW-0443">Lipid metabolism</keyword>
<keyword id="KW-0472">Membrane</keyword>
<keyword id="KW-0812">Transmembrane</keyword>
<keyword id="KW-1133">Transmembrane helix</keyword>
<gene>
    <name type="primary">lifO</name>
    <name type="synonym">lipB</name>
    <name type="synonym">lpwB</name>
</gene>
<evidence type="ECO:0000250" key="1"/>
<evidence type="ECO:0000255" key="2"/>
<evidence type="ECO:0000305" key="3"/>
<dbReference type="EMBL" id="U88907">
    <property type="protein sequence ID" value="AAB53648.1"/>
    <property type="molecule type" value="Genomic_DNA"/>
</dbReference>
<dbReference type="SMR" id="O05938"/>
<dbReference type="GO" id="GO:0005886">
    <property type="term" value="C:plasma membrane"/>
    <property type="evidence" value="ECO:0007669"/>
    <property type="project" value="UniProtKB-SubCell"/>
</dbReference>
<dbReference type="GO" id="GO:0051082">
    <property type="term" value="F:unfolded protein binding"/>
    <property type="evidence" value="ECO:0007669"/>
    <property type="project" value="UniProtKB-UniRule"/>
</dbReference>
<dbReference type="GO" id="GO:0016042">
    <property type="term" value="P:lipid catabolic process"/>
    <property type="evidence" value="ECO:0007669"/>
    <property type="project" value="UniProtKB-UniRule"/>
</dbReference>
<dbReference type="GO" id="GO:0006457">
    <property type="term" value="P:protein folding"/>
    <property type="evidence" value="ECO:0007669"/>
    <property type="project" value="UniProtKB-UniRule"/>
</dbReference>
<dbReference type="HAMAP" id="MF_00790">
    <property type="entry name" value="Lipase_chap"/>
    <property type="match status" value="1"/>
</dbReference>
<dbReference type="InterPro" id="IPR004961">
    <property type="entry name" value="Lipase_chaperone"/>
</dbReference>
<dbReference type="Pfam" id="PF03280">
    <property type="entry name" value="Lipase_chap"/>
    <property type="match status" value="1"/>
</dbReference>
<dbReference type="SUPFAM" id="SSF158855">
    <property type="entry name" value="Lipase chaperone-like"/>
    <property type="match status" value="1"/>
</dbReference>
<organism>
    <name type="scientific">Pseudomonas wisconsinensis</name>
    <dbReference type="NCBI Taxonomy" id="57038"/>
    <lineage>
        <taxon>Bacteria</taxon>
        <taxon>Pseudomonadati</taxon>
        <taxon>Pseudomonadota</taxon>
        <taxon>Gammaproteobacteria</taxon>
        <taxon>Pseudomonadales</taxon>
        <taxon>Pseudomonadaceae</taxon>
        <taxon>Pseudomonas</taxon>
    </lineage>
</organism>
<proteinExistence type="inferred from homology"/>